<gene>
    <name evidence="1" type="primary">argD</name>
    <name type="ordered locus">LA_2153</name>
</gene>
<name>ARGD_LEPIN</name>
<comment type="catalytic activity">
    <reaction evidence="1">
        <text>N(2)-acetyl-L-ornithine + 2-oxoglutarate = N-acetyl-L-glutamate 5-semialdehyde + L-glutamate</text>
        <dbReference type="Rhea" id="RHEA:18049"/>
        <dbReference type="ChEBI" id="CHEBI:16810"/>
        <dbReference type="ChEBI" id="CHEBI:29123"/>
        <dbReference type="ChEBI" id="CHEBI:29985"/>
        <dbReference type="ChEBI" id="CHEBI:57805"/>
        <dbReference type="EC" id="2.6.1.11"/>
    </reaction>
</comment>
<comment type="cofactor">
    <cofactor evidence="1">
        <name>pyridoxal 5'-phosphate</name>
        <dbReference type="ChEBI" id="CHEBI:597326"/>
    </cofactor>
    <text evidence="1">Binds 1 pyridoxal phosphate per subunit.</text>
</comment>
<comment type="pathway">
    <text evidence="1">Amino-acid biosynthesis; L-arginine biosynthesis; N(2)-acetyl-L-ornithine from L-glutamate: step 4/4.</text>
</comment>
<comment type="subunit">
    <text evidence="1">Homodimer.</text>
</comment>
<comment type="subcellular location">
    <subcellularLocation>
        <location evidence="1">Cytoplasm</location>
    </subcellularLocation>
</comment>
<comment type="miscellaneous">
    <text evidence="1">May also have succinyldiaminopimelate aminotransferase activity, thus carrying out the corresponding step in lysine biosynthesis.</text>
</comment>
<comment type="similarity">
    <text evidence="1">Belongs to the class-III pyridoxal-phosphate-dependent aminotransferase family. ArgD subfamily.</text>
</comment>
<proteinExistence type="inferred from homology"/>
<reference key="1">
    <citation type="journal article" date="2003" name="Nature">
        <title>Unique physiological and pathogenic features of Leptospira interrogans revealed by whole-genome sequencing.</title>
        <authorList>
            <person name="Ren S.-X."/>
            <person name="Fu G."/>
            <person name="Jiang X.-G."/>
            <person name="Zeng R."/>
            <person name="Miao Y.-G."/>
            <person name="Xu H."/>
            <person name="Zhang Y.-X."/>
            <person name="Xiong H."/>
            <person name="Lu G."/>
            <person name="Lu L.-F."/>
            <person name="Jiang H.-Q."/>
            <person name="Jia J."/>
            <person name="Tu Y.-F."/>
            <person name="Jiang J.-X."/>
            <person name="Gu W.-Y."/>
            <person name="Zhang Y.-Q."/>
            <person name="Cai Z."/>
            <person name="Sheng H.-H."/>
            <person name="Yin H.-F."/>
            <person name="Zhang Y."/>
            <person name="Zhu G.-F."/>
            <person name="Wan M."/>
            <person name="Huang H.-L."/>
            <person name="Qian Z."/>
            <person name="Wang S.-Y."/>
            <person name="Ma W."/>
            <person name="Yao Z.-J."/>
            <person name="Shen Y."/>
            <person name="Qiang B.-Q."/>
            <person name="Xia Q.-C."/>
            <person name="Guo X.-K."/>
            <person name="Danchin A."/>
            <person name="Saint Girons I."/>
            <person name="Somerville R.L."/>
            <person name="Wen Y.-M."/>
            <person name="Shi M.-H."/>
            <person name="Chen Z."/>
            <person name="Xu J.-G."/>
            <person name="Zhao G.-P."/>
        </authorList>
    </citation>
    <scope>NUCLEOTIDE SEQUENCE [LARGE SCALE GENOMIC DNA]</scope>
    <source>
        <strain>56601</strain>
    </source>
</reference>
<reference key="2">
    <citation type="journal article" date="1993" name="J. Gen. Microbiol.">
        <title>Cloning and analysis of the leuB gene of Leptospira interrogans serovar pomona.</title>
        <authorList>
            <person name="Ding M."/>
            <person name="Yelton D.B."/>
        </authorList>
    </citation>
    <scope>NUCLEOTIDE SEQUENCE [GENOMIC DNA] OF 239-406</scope>
    <source>
        <strain>Kenniwicki / Serogroup Pomona / Serovar pomona</strain>
    </source>
</reference>
<evidence type="ECO:0000255" key="1">
    <source>
        <dbReference type="HAMAP-Rule" id="MF_01107"/>
    </source>
</evidence>
<evidence type="ECO:0000305" key="2"/>
<feature type="chain" id="PRO_0000112751" description="Acetylornithine aminotransferase">
    <location>
        <begin position="1"/>
        <end position="406"/>
    </location>
</feature>
<feature type="binding site" evidence="1">
    <location>
        <begin position="113"/>
        <end position="114"/>
    </location>
    <ligand>
        <name>pyridoxal 5'-phosphate</name>
        <dbReference type="ChEBI" id="CHEBI:597326"/>
    </ligand>
</feature>
<feature type="binding site" evidence="1">
    <location>
        <position position="145"/>
    </location>
    <ligand>
        <name>pyridoxal 5'-phosphate</name>
        <dbReference type="ChEBI" id="CHEBI:597326"/>
    </ligand>
</feature>
<feature type="binding site" evidence="1">
    <location>
        <position position="148"/>
    </location>
    <ligand>
        <name>N(2)-acetyl-L-ornithine</name>
        <dbReference type="ChEBI" id="CHEBI:57805"/>
    </ligand>
</feature>
<feature type="binding site" evidence="1">
    <location>
        <begin position="233"/>
        <end position="236"/>
    </location>
    <ligand>
        <name>pyridoxal 5'-phosphate</name>
        <dbReference type="ChEBI" id="CHEBI:597326"/>
    </ligand>
</feature>
<feature type="binding site" evidence="1">
    <location>
        <position position="290"/>
    </location>
    <ligand>
        <name>N(2)-acetyl-L-ornithine</name>
        <dbReference type="ChEBI" id="CHEBI:57805"/>
    </ligand>
</feature>
<feature type="binding site" evidence="1">
    <location>
        <position position="291"/>
    </location>
    <ligand>
        <name>pyridoxal 5'-phosphate</name>
        <dbReference type="ChEBI" id="CHEBI:597326"/>
    </ligand>
</feature>
<feature type="modified residue" description="N6-(pyridoxal phosphate)lysine" evidence="1">
    <location>
        <position position="262"/>
    </location>
</feature>
<feature type="sequence conflict" description="In Ref. 2; AAA72087." evidence="2" ref="2">
    <original>K</original>
    <variation>R</variation>
    <location>
        <position position="358"/>
    </location>
</feature>
<feature type="sequence conflict" description="In Ref. 2; AAA72087." evidence="2" ref="2">
    <original>AGLVVNATADNVVRIMPPLTISTDFLNQGLDILESVLKQN</original>
    <variation>QGS</variation>
    <location>
        <begin position="367"/>
        <end position="406"/>
    </location>
</feature>
<protein>
    <recommendedName>
        <fullName evidence="1">Acetylornithine aminotransferase</fullName>
        <shortName evidence="1">ACOAT</shortName>
        <ecNumber evidence="1">2.6.1.11</ecNumber>
    </recommendedName>
</protein>
<keyword id="KW-0028">Amino-acid biosynthesis</keyword>
<keyword id="KW-0032">Aminotransferase</keyword>
<keyword id="KW-0055">Arginine biosynthesis</keyword>
<keyword id="KW-0963">Cytoplasm</keyword>
<keyword id="KW-0663">Pyridoxal phosphate</keyword>
<keyword id="KW-1185">Reference proteome</keyword>
<keyword id="KW-0808">Transferase</keyword>
<sequence length="406" mass="44866">MNDADIHKELFQHTKELADHYLLNTYARYDVAFRYGVNELLFDFDNKQYIDFHCGVAVTNLGHADPDIIEVVRSQADKLFHTSNLFYSEEASKLAELLILNSFPGKVFLTNSGTEAIEGAFKLARKYAYSKSIVDPIILSLEKSFHGRSVSGMSLTGQDKIRKGYGELLKGIEFIEPNNDEALVAAFERYQGRIVALIEEPILGESGIIPLSRNFLTLSRELTEENEALLIFDEIQTGMGRTGTLFAFETMGFSPDAMTLAKGLGSGFPIGALIVGEKYQDLFTQGSHGSTFGGNHLAAAVAYETIRIIQTREILNNVNICSDIAFTRLREMQEKYPVISEVRGKGLHIGLELKVPSKPIAEACLSAGLVVNATADNVVRIMPPLTISTDFLNQGLDILESVLKQN</sequence>
<dbReference type="EC" id="2.6.1.11" evidence="1"/>
<dbReference type="EMBL" id="AE010300">
    <property type="protein sequence ID" value="AAN49352.1"/>
    <property type="molecule type" value="Genomic_DNA"/>
</dbReference>
<dbReference type="EMBL" id="M59431">
    <property type="protein sequence ID" value="AAA72087.1"/>
    <property type="molecule type" value="Unassigned_DNA"/>
</dbReference>
<dbReference type="RefSeq" id="NP_712334.1">
    <property type="nucleotide sequence ID" value="NC_004342.2"/>
</dbReference>
<dbReference type="RefSeq" id="WP_000995952.1">
    <property type="nucleotide sequence ID" value="NC_004342.2"/>
</dbReference>
<dbReference type="SMR" id="P24087"/>
<dbReference type="FunCoup" id="P24087">
    <property type="interactions" value="470"/>
</dbReference>
<dbReference type="STRING" id="189518.LA_2153"/>
<dbReference type="PaxDb" id="189518-LA_2153"/>
<dbReference type="EnsemblBacteria" id="AAN49352">
    <property type="protein sequence ID" value="AAN49352"/>
    <property type="gene ID" value="LA_2153"/>
</dbReference>
<dbReference type="KEGG" id="lil:LA_2153"/>
<dbReference type="PATRIC" id="fig|189518.3.peg.2145"/>
<dbReference type="HOGENOM" id="CLU_016922_10_1_12"/>
<dbReference type="InParanoid" id="P24087"/>
<dbReference type="OrthoDB" id="9807885at2"/>
<dbReference type="UniPathway" id="UPA00068">
    <property type="reaction ID" value="UER00109"/>
</dbReference>
<dbReference type="Proteomes" id="UP000001408">
    <property type="component" value="Chromosome I"/>
</dbReference>
<dbReference type="GO" id="GO:0005737">
    <property type="term" value="C:cytoplasm"/>
    <property type="evidence" value="ECO:0007669"/>
    <property type="project" value="UniProtKB-SubCell"/>
</dbReference>
<dbReference type="GO" id="GO:0042802">
    <property type="term" value="F:identical protein binding"/>
    <property type="evidence" value="ECO:0000318"/>
    <property type="project" value="GO_Central"/>
</dbReference>
<dbReference type="GO" id="GO:0003992">
    <property type="term" value="F:N2-acetyl-L-ornithine:2-oxoglutarate 5-aminotransferase activity"/>
    <property type="evidence" value="ECO:0007669"/>
    <property type="project" value="UniProtKB-UniRule"/>
</dbReference>
<dbReference type="GO" id="GO:0030170">
    <property type="term" value="F:pyridoxal phosphate binding"/>
    <property type="evidence" value="ECO:0000318"/>
    <property type="project" value="GO_Central"/>
</dbReference>
<dbReference type="GO" id="GO:0006526">
    <property type="term" value="P:L-arginine biosynthetic process"/>
    <property type="evidence" value="ECO:0007669"/>
    <property type="project" value="UniProtKB-UniRule"/>
</dbReference>
<dbReference type="CDD" id="cd00610">
    <property type="entry name" value="OAT_like"/>
    <property type="match status" value="1"/>
</dbReference>
<dbReference type="FunFam" id="3.40.640.10:FF:000118">
    <property type="entry name" value="Acetylornithine aminotransferase"/>
    <property type="match status" value="1"/>
</dbReference>
<dbReference type="Gene3D" id="3.90.1150.10">
    <property type="entry name" value="Aspartate Aminotransferase, domain 1"/>
    <property type="match status" value="1"/>
</dbReference>
<dbReference type="Gene3D" id="3.40.640.10">
    <property type="entry name" value="Type I PLP-dependent aspartate aminotransferase-like (Major domain)"/>
    <property type="match status" value="1"/>
</dbReference>
<dbReference type="HAMAP" id="MF_01107">
    <property type="entry name" value="ArgD_aminotrans_3"/>
    <property type="match status" value="1"/>
</dbReference>
<dbReference type="InterPro" id="IPR004636">
    <property type="entry name" value="AcOrn/SuccOrn_fam"/>
</dbReference>
<dbReference type="InterPro" id="IPR005814">
    <property type="entry name" value="Aminotrans_3"/>
</dbReference>
<dbReference type="InterPro" id="IPR049704">
    <property type="entry name" value="Aminotrans_3_PPA_site"/>
</dbReference>
<dbReference type="InterPro" id="IPR050103">
    <property type="entry name" value="Class-III_PLP-dep_AT"/>
</dbReference>
<dbReference type="InterPro" id="IPR015424">
    <property type="entry name" value="PyrdxlP-dep_Trfase"/>
</dbReference>
<dbReference type="InterPro" id="IPR015421">
    <property type="entry name" value="PyrdxlP-dep_Trfase_major"/>
</dbReference>
<dbReference type="InterPro" id="IPR015422">
    <property type="entry name" value="PyrdxlP-dep_Trfase_small"/>
</dbReference>
<dbReference type="NCBIfam" id="NF002325">
    <property type="entry name" value="PRK01278.1"/>
    <property type="match status" value="1"/>
</dbReference>
<dbReference type="PANTHER" id="PTHR11986:SF79">
    <property type="entry name" value="ACETYLORNITHINE AMINOTRANSFERASE, MITOCHONDRIAL"/>
    <property type="match status" value="1"/>
</dbReference>
<dbReference type="PANTHER" id="PTHR11986">
    <property type="entry name" value="AMINOTRANSFERASE CLASS III"/>
    <property type="match status" value="1"/>
</dbReference>
<dbReference type="Pfam" id="PF00202">
    <property type="entry name" value="Aminotran_3"/>
    <property type="match status" value="1"/>
</dbReference>
<dbReference type="PIRSF" id="PIRSF000521">
    <property type="entry name" value="Transaminase_4ab_Lys_Orn"/>
    <property type="match status" value="1"/>
</dbReference>
<dbReference type="SUPFAM" id="SSF53383">
    <property type="entry name" value="PLP-dependent transferases"/>
    <property type="match status" value="1"/>
</dbReference>
<dbReference type="PROSITE" id="PS00600">
    <property type="entry name" value="AA_TRANSFER_CLASS_3"/>
    <property type="match status" value="1"/>
</dbReference>
<organism>
    <name type="scientific">Leptospira interrogans serogroup Icterohaemorrhagiae serovar Lai (strain 56601)</name>
    <dbReference type="NCBI Taxonomy" id="189518"/>
    <lineage>
        <taxon>Bacteria</taxon>
        <taxon>Pseudomonadati</taxon>
        <taxon>Spirochaetota</taxon>
        <taxon>Spirochaetia</taxon>
        <taxon>Leptospirales</taxon>
        <taxon>Leptospiraceae</taxon>
        <taxon>Leptospira</taxon>
    </lineage>
</organism>
<accession>P24087</accession>